<protein>
    <recommendedName>
        <fullName evidence="1">N-(5'-phosphoribosyl)anthranilate isomerase</fullName>
        <shortName evidence="1">PRAI</shortName>
        <ecNumber evidence="1">5.3.1.24</ecNumber>
    </recommendedName>
</protein>
<keyword id="KW-0028">Amino-acid biosynthesis</keyword>
<keyword id="KW-0057">Aromatic amino acid biosynthesis</keyword>
<keyword id="KW-0413">Isomerase</keyword>
<keyword id="KW-0822">Tryptophan biosynthesis</keyword>
<reference key="1">
    <citation type="journal article" date="2005" name="J. Bacteriol.">
        <title>Whole-genome sequence analysis of Pseudomonas syringae pv. phaseolicola 1448A reveals divergence among pathovars in genes involved in virulence and transposition.</title>
        <authorList>
            <person name="Joardar V."/>
            <person name="Lindeberg M."/>
            <person name="Jackson R.W."/>
            <person name="Selengut J."/>
            <person name="Dodson R."/>
            <person name="Brinkac L.M."/>
            <person name="Daugherty S.C."/>
            <person name="DeBoy R.T."/>
            <person name="Durkin A.S."/>
            <person name="Gwinn Giglio M."/>
            <person name="Madupu R."/>
            <person name="Nelson W.C."/>
            <person name="Rosovitz M.J."/>
            <person name="Sullivan S.A."/>
            <person name="Crabtree J."/>
            <person name="Creasy T."/>
            <person name="Davidsen T.M."/>
            <person name="Haft D.H."/>
            <person name="Zafar N."/>
            <person name="Zhou L."/>
            <person name="Halpin R."/>
            <person name="Holley T."/>
            <person name="Khouri H.M."/>
            <person name="Feldblyum T.V."/>
            <person name="White O."/>
            <person name="Fraser C.M."/>
            <person name="Chatterjee A.K."/>
            <person name="Cartinhour S."/>
            <person name="Schneider D."/>
            <person name="Mansfield J.W."/>
            <person name="Collmer A."/>
            <person name="Buell R."/>
        </authorList>
    </citation>
    <scope>NUCLEOTIDE SEQUENCE [LARGE SCALE GENOMIC DNA]</scope>
    <source>
        <strain>1448A / Race 6</strain>
    </source>
</reference>
<evidence type="ECO:0000255" key="1">
    <source>
        <dbReference type="HAMAP-Rule" id="MF_00135"/>
    </source>
</evidence>
<organism>
    <name type="scientific">Pseudomonas savastanoi pv. phaseolicola (strain 1448A / Race 6)</name>
    <name type="common">Pseudomonas syringae pv. phaseolicola (strain 1448A / Race 6)</name>
    <dbReference type="NCBI Taxonomy" id="264730"/>
    <lineage>
        <taxon>Bacteria</taxon>
        <taxon>Pseudomonadati</taxon>
        <taxon>Pseudomonadota</taxon>
        <taxon>Gammaproteobacteria</taxon>
        <taxon>Pseudomonadales</taxon>
        <taxon>Pseudomonadaceae</taxon>
        <taxon>Pseudomonas</taxon>
    </lineage>
</organism>
<sequence length="206" mass="21902">MSAVRSKICGITRIEDALAAAEAGADAIGLVFYPKSPRAVTVLQARAIIAALPPFITTVGLFVNASRCELNETLDAVALDMLQFHGDETPDECDGYHRPYIKALRVKAGDDIAQVCRTYRNARGVLLDTYVEGVPGGTGETFDWALIPDDLDKPVILAGGLTSANVAQAIAQVRPYAVDVSGGVEKSKGIKDREKILAFMSAVHGT</sequence>
<comment type="catalytic activity">
    <reaction evidence="1">
        <text>N-(5-phospho-beta-D-ribosyl)anthranilate = 1-(2-carboxyphenylamino)-1-deoxy-D-ribulose 5-phosphate</text>
        <dbReference type="Rhea" id="RHEA:21540"/>
        <dbReference type="ChEBI" id="CHEBI:18277"/>
        <dbReference type="ChEBI" id="CHEBI:58613"/>
        <dbReference type="EC" id="5.3.1.24"/>
    </reaction>
</comment>
<comment type="pathway">
    <text evidence="1">Amino-acid biosynthesis; L-tryptophan biosynthesis; L-tryptophan from chorismate: step 3/5.</text>
</comment>
<comment type="similarity">
    <text evidence="1">Belongs to the TrpF family.</text>
</comment>
<gene>
    <name evidence="1" type="primary">trpF</name>
    <name type="ordered locus">PSPPH_1657</name>
</gene>
<name>TRPF_PSE14</name>
<accession>Q48L25</accession>
<feature type="chain" id="PRO_1000018619" description="N-(5'-phosphoribosyl)anthranilate isomerase">
    <location>
        <begin position="1"/>
        <end position="206"/>
    </location>
</feature>
<dbReference type="EC" id="5.3.1.24" evidence="1"/>
<dbReference type="EMBL" id="CP000058">
    <property type="protein sequence ID" value="AAZ37852.1"/>
    <property type="molecule type" value="Genomic_DNA"/>
</dbReference>
<dbReference type="RefSeq" id="WP_004664334.1">
    <property type="nucleotide sequence ID" value="NC_005773.3"/>
</dbReference>
<dbReference type="SMR" id="Q48L25"/>
<dbReference type="KEGG" id="psp:PSPPH_1657"/>
<dbReference type="eggNOG" id="COG0135">
    <property type="taxonomic scope" value="Bacteria"/>
</dbReference>
<dbReference type="HOGENOM" id="CLU_076364_2_0_6"/>
<dbReference type="UniPathway" id="UPA00035">
    <property type="reaction ID" value="UER00042"/>
</dbReference>
<dbReference type="Proteomes" id="UP000000551">
    <property type="component" value="Chromosome"/>
</dbReference>
<dbReference type="GO" id="GO:0004640">
    <property type="term" value="F:phosphoribosylanthranilate isomerase activity"/>
    <property type="evidence" value="ECO:0007669"/>
    <property type="project" value="UniProtKB-UniRule"/>
</dbReference>
<dbReference type="GO" id="GO:0000162">
    <property type="term" value="P:L-tryptophan biosynthetic process"/>
    <property type="evidence" value="ECO:0007669"/>
    <property type="project" value="UniProtKB-UniRule"/>
</dbReference>
<dbReference type="CDD" id="cd00405">
    <property type="entry name" value="PRAI"/>
    <property type="match status" value="1"/>
</dbReference>
<dbReference type="FunFam" id="3.20.20.70:FF:000075">
    <property type="entry name" value="Tryptophan biosynthesis protein TRP1"/>
    <property type="match status" value="1"/>
</dbReference>
<dbReference type="Gene3D" id="3.20.20.70">
    <property type="entry name" value="Aldolase class I"/>
    <property type="match status" value="1"/>
</dbReference>
<dbReference type="HAMAP" id="MF_00135">
    <property type="entry name" value="PRAI"/>
    <property type="match status" value="1"/>
</dbReference>
<dbReference type="InterPro" id="IPR013785">
    <property type="entry name" value="Aldolase_TIM"/>
</dbReference>
<dbReference type="InterPro" id="IPR001240">
    <property type="entry name" value="PRAI_dom"/>
</dbReference>
<dbReference type="InterPro" id="IPR011060">
    <property type="entry name" value="RibuloseP-bd_barrel"/>
</dbReference>
<dbReference type="InterPro" id="IPR044643">
    <property type="entry name" value="TrpF_fam"/>
</dbReference>
<dbReference type="NCBIfam" id="NF002298">
    <property type="entry name" value="PRK01222.1-4"/>
    <property type="match status" value="1"/>
</dbReference>
<dbReference type="NCBIfam" id="NF002299">
    <property type="entry name" value="PRK01222.1-6"/>
    <property type="match status" value="1"/>
</dbReference>
<dbReference type="PANTHER" id="PTHR42894">
    <property type="entry name" value="N-(5'-PHOSPHORIBOSYL)ANTHRANILATE ISOMERASE"/>
    <property type="match status" value="1"/>
</dbReference>
<dbReference type="PANTHER" id="PTHR42894:SF1">
    <property type="entry name" value="N-(5'-PHOSPHORIBOSYL)ANTHRANILATE ISOMERASE"/>
    <property type="match status" value="1"/>
</dbReference>
<dbReference type="Pfam" id="PF00697">
    <property type="entry name" value="PRAI"/>
    <property type="match status" value="1"/>
</dbReference>
<dbReference type="SUPFAM" id="SSF51366">
    <property type="entry name" value="Ribulose-phoshate binding barrel"/>
    <property type="match status" value="1"/>
</dbReference>
<proteinExistence type="inferred from homology"/>